<comment type="function">
    <text evidence="1">Catalyzes the acyloin condensation reaction between C atoms 2 and 3 of pyruvate and glyceraldehyde 3-phosphate to yield 1-deoxy-D-xylulose-5-phosphate (DXP).</text>
</comment>
<comment type="catalytic activity">
    <reaction evidence="1">
        <text>D-glyceraldehyde 3-phosphate + pyruvate + H(+) = 1-deoxy-D-xylulose 5-phosphate + CO2</text>
        <dbReference type="Rhea" id="RHEA:12605"/>
        <dbReference type="ChEBI" id="CHEBI:15361"/>
        <dbReference type="ChEBI" id="CHEBI:15378"/>
        <dbReference type="ChEBI" id="CHEBI:16526"/>
        <dbReference type="ChEBI" id="CHEBI:57792"/>
        <dbReference type="ChEBI" id="CHEBI:59776"/>
        <dbReference type="EC" id="2.2.1.7"/>
    </reaction>
</comment>
<comment type="cofactor">
    <cofactor evidence="1">
        <name>Mg(2+)</name>
        <dbReference type="ChEBI" id="CHEBI:18420"/>
    </cofactor>
    <text evidence="1">Binds 1 Mg(2+) ion per subunit.</text>
</comment>
<comment type="cofactor">
    <cofactor evidence="1">
        <name>thiamine diphosphate</name>
        <dbReference type="ChEBI" id="CHEBI:58937"/>
    </cofactor>
    <text evidence="1">Binds 1 thiamine pyrophosphate per subunit.</text>
</comment>
<comment type="pathway">
    <text evidence="1">Metabolic intermediate biosynthesis; 1-deoxy-D-xylulose 5-phosphate biosynthesis; 1-deoxy-D-xylulose 5-phosphate from D-glyceraldehyde 3-phosphate and pyruvate: step 1/1.</text>
</comment>
<comment type="subunit">
    <text evidence="1">Homodimer.</text>
</comment>
<comment type="similarity">
    <text evidence="1">Belongs to the transketolase family. DXPS subfamily.</text>
</comment>
<gene>
    <name evidence="1" type="primary">dxs</name>
    <name type="ordered locus">Arth_1645</name>
</gene>
<dbReference type="EC" id="2.2.1.7" evidence="1"/>
<dbReference type="EMBL" id="CP000454">
    <property type="protein sequence ID" value="ABK03039.1"/>
    <property type="molecule type" value="Genomic_DNA"/>
</dbReference>
<dbReference type="RefSeq" id="WP_011691505.1">
    <property type="nucleotide sequence ID" value="NC_008541.1"/>
</dbReference>
<dbReference type="SMR" id="A0JVG9"/>
<dbReference type="STRING" id="290399.Arth_1645"/>
<dbReference type="KEGG" id="art:Arth_1645"/>
<dbReference type="eggNOG" id="COG1154">
    <property type="taxonomic scope" value="Bacteria"/>
</dbReference>
<dbReference type="HOGENOM" id="CLU_009227_1_4_11"/>
<dbReference type="OrthoDB" id="9803371at2"/>
<dbReference type="UniPathway" id="UPA00064">
    <property type="reaction ID" value="UER00091"/>
</dbReference>
<dbReference type="Proteomes" id="UP000000754">
    <property type="component" value="Chromosome"/>
</dbReference>
<dbReference type="GO" id="GO:0005829">
    <property type="term" value="C:cytosol"/>
    <property type="evidence" value="ECO:0007669"/>
    <property type="project" value="TreeGrafter"/>
</dbReference>
<dbReference type="GO" id="GO:0008661">
    <property type="term" value="F:1-deoxy-D-xylulose-5-phosphate synthase activity"/>
    <property type="evidence" value="ECO:0007669"/>
    <property type="project" value="UniProtKB-UniRule"/>
</dbReference>
<dbReference type="GO" id="GO:0000287">
    <property type="term" value="F:magnesium ion binding"/>
    <property type="evidence" value="ECO:0007669"/>
    <property type="project" value="UniProtKB-UniRule"/>
</dbReference>
<dbReference type="GO" id="GO:0030976">
    <property type="term" value="F:thiamine pyrophosphate binding"/>
    <property type="evidence" value="ECO:0007669"/>
    <property type="project" value="UniProtKB-UniRule"/>
</dbReference>
<dbReference type="GO" id="GO:0052865">
    <property type="term" value="P:1-deoxy-D-xylulose 5-phosphate biosynthetic process"/>
    <property type="evidence" value="ECO:0007669"/>
    <property type="project" value="UniProtKB-UniPathway"/>
</dbReference>
<dbReference type="GO" id="GO:0019288">
    <property type="term" value="P:isopentenyl diphosphate biosynthetic process, methylerythritol 4-phosphate pathway"/>
    <property type="evidence" value="ECO:0007669"/>
    <property type="project" value="TreeGrafter"/>
</dbReference>
<dbReference type="GO" id="GO:0016114">
    <property type="term" value="P:terpenoid biosynthetic process"/>
    <property type="evidence" value="ECO:0007669"/>
    <property type="project" value="UniProtKB-UniRule"/>
</dbReference>
<dbReference type="GO" id="GO:0009228">
    <property type="term" value="P:thiamine biosynthetic process"/>
    <property type="evidence" value="ECO:0007669"/>
    <property type="project" value="UniProtKB-UniRule"/>
</dbReference>
<dbReference type="CDD" id="cd02007">
    <property type="entry name" value="TPP_DXS"/>
    <property type="match status" value="1"/>
</dbReference>
<dbReference type="CDD" id="cd07033">
    <property type="entry name" value="TPP_PYR_DXS_TK_like"/>
    <property type="match status" value="1"/>
</dbReference>
<dbReference type="FunFam" id="3.40.50.970:FF:000005">
    <property type="entry name" value="1-deoxy-D-xylulose-5-phosphate synthase"/>
    <property type="match status" value="1"/>
</dbReference>
<dbReference type="Gene3D" id="3.40.50.920">
    <property type="match status" value="1"/>
</dbReference>
<dbReference type="Gene3D" id="3.40.50.970">
    <property type="match status" value="2"/>
</dbReference>
<dbReference type="HAMAP" id="MF_00315">
    <property type="entry name" value="DXP_synth"/>
    <property type="match status" value="1"/>
</dbReference>
<dbReference type="InterPro" id="IPR005477">
    <property type="entry name" value="Dxylulose-5-P_synthase"/>
</dbReference>
<dbReference type="InterPro" id="IPR029061">
    <property type="entry name" value="THDP-binding"/>
</dbReference>
<dbReference type="InterPro" id="IPR009014">
    <property type="entry name" value="Transketo_C/PFOR_II"/>
</dbReference>
<dbReference type="InterPro" id="IPR005475">
    <property type="entry name" value="Transketolase-like_Pyr-bd"/>
</dbReference>
<dbReference type="InterPro" id="IPR020826">
    <property type="entry name" value="Transketolase_BS"/>
</dbReference>
<dbReference type="InterPro" id="IPR033248">
    <property type="entry name" value="Transketolase_C"/>
</dbReference>
<dbReference type="NCBIfam" id="TIGR00204">
    <property type="entry name" value="dxs"/>
    <property type="match status" value="1"/>
</dbReference>
<dbReference type="NCBIfam" id="NF003933">
    <property type="entry name" value="PRK05444.2-2"/>
    <property type="match status" value="1"/>
</dbReference>
<dbReference type="PANTHER" id="PTHR43322">
    <property type="entry name" value="1-D-DEOXYXYLULOSE 5-PHOSPHATE SYNTHASE-RELATED"/>
    <property type="match status" value="1"/>
</dbReference>
<dbReference type="PANTHER" id="PTHR43322:SF5">
    <property type="entry name" value="1-DEOXY-D-XYLULOSE-5-PHOSPHATE SYNTHASE, CHLOROPLASTIC"/>
    <property type="match status" value="1"/>
</dbReference>
<dbReference type="Pfam" id="PF13292">
    <property type="entry name" value="DXP_synthase_N"/>
    <property type="match status" value="1"/>
</dbReference>
<dbReference type="Pfam" id="PF02779">
    <property type="entry name" value="Transket_pyr"/>
    <property type="match status" value="1"/>
</dbReference>
<dbReference type="Pfam" id="PF02780">
    <property type="entry name" value="Transketolase_C"/>
    <property type="match status" value="1"/>
</dbReference>
<dbReference type="SMART" id="SM00861">
    <property type="entry name" value="Transket_pyr"/>
    <property type="match status" value="1"/>
</dbReference>
<dbReference type="SUPFAM" id="SSF52518">
    <property type="entry name" value="Thiamin diphosphate-binding fold (THDP-binding)"/>
    <property type="match status" value="2"/>
</dbReference>
<dbReference type="SUPFAM" id="SSF52922">
    <property type="entry name" value="TK C-terminal domain-like"/>
    <property type="match status" value="1"/>
</dbReference>
<dbReference type="PROSITE" id="PS00802">
    <property type="entry name" value="TRANSKETOLASE_2"/>
    <property type="match status" value="1"/>
</dbReference>
<proteinExistence type="inferred from homology"/>
<keyword id="KW-0414">Isoprene biosynthesis</keyword>
<keyword id="KW-0460">Magnesium</keyword>
<keyword id="KW-0479">Metal-binding</keyword>
<keyword id="KW-1185">Reference proteome</keyword>
<keyword id="KW-0784">Thiamine biosynthesis</keyword>
<keyword id="KW-0786">Thiamine pyrophosphate</keyword>
<keyword id="KW-0808">Transferase</keyword>
<organism>
    <name type="scientific">Arthrobacter sp. (strain FB24)</name>
    <dbReference type="NCBI Taxonomy" id="290399"/>
    <lineage>
        <taxon>Bacteria</taxon>
        <taxon>Bacillati</taxon>
        <taxon>Actinomycetota</taxon>
        <taxon>Actinomycetes</taxon>
        <taxon>Micrococcales</taxon>
        <taxon>Micrococcaceae</taxon>
        <taxon>Arthrobacter</taxon>
    </lineage>
</organism>
<evidence type="ECO:0000255" key="1">
    <source>
        <dbReference type="HAMAP-Rule" id="MF_00315"/>
    </source>
</evidence>
<evidence type="ECO:0000256" key="2">
    <source>
        <dbReference type="SAM" id="MobiDB-lite"/>
    </source>
</evidence>
<feature type="chain" id="PRO_1000019006" description="1-deoxy-D-xylulose-5-phosphate synthase">
    <location>
        <begin position="1"/>
        <end position="657"/>
    </location>
</feature>
<feature type="region of interest" description="Disordered" evidence="2">
    <location>
        <begin position="91"/>
        <end position="110"/>
    </location>
</feature>
<feature type="compositionally biased region" description="Basic and acidic residues" evidence="2">
    <location>
        <begin position="101"/>
        <end position="110"/>
    </location>
</feature>
<feature type="binding site" evidence="1">
    <location>
        <position position="73"/>
    </location>
    <ligand>
        <name>thiamine diphosphate</name>
        <dbReference type="ChEBI" id="CHEBI:58937"/>
    </ligand>
</feature>
<feature type="binding site" evidence="1">
    <location>
        <begin position="113"/>
        <end position="115"/>
    </location>
    <ligand>
        <name>thiamine diphosphate</name>
        <dbReference type="ChEBI" id="CHEBI:58937"/>
    </ligand>
</feature>
<feature type="binding site" evidence="1">
    <location>
        <position position="145"/>
    </location>
    <ligand>
        <name>Mg(2+)</name>
        <dbReference type="ChEBI" id="CHEBI:18420"/>
    </ligand>
</feature>
<feature type="binding site" evidence="1">
    <location>
        <begin position="146"/>
        <end position="147"/>
    </location>
    <ligand>
        <name>thiamine diphosphate</name>
        <dbReference type="ChEBI" id="CHEBI:58937"/>
    </ligand>
</feature>
<feature type="binding site" evidence="1">
    <location>
        <position position="175"/>
    </location>
    <ligand>
        <name>Mg(2+)</name>
        <dbReference type="ChEBI" id="CHEBI:18420"/>
    </ligand>
</feature>
<feature type="binding site" evidence="1">
    <location>
        <position position="175"/>
    </location>
    <ligand>
        <name>thiamine diphosphate</name>
        <dbReference type="ChEBI" id="CHEBI:58937"/>
    </ligand>
</feature>
<feature type="binding site" evidence="1">
    <location>
        <position position="293"/>
    </location>
    <ligand>
        <name>thiamine diphosphate</name>
        <dbReference type="ChEBI" id="CHEBI:58937"/>
    </ligand>
</feature>
<feature type="binding site" evidence="1">
    <location>
        <position position="375"/>
    </location>
    <ligand>
        <name>thiamine diphosphate</name>
        <dbReference type="ChEBI" id="CHEBI:58937"/>
    </ligand>
</feature>
<reference key="1">
    <citation type="journal article" date="2013" name="Stand. Genomic Sci.">
        <title>Complete genome sequence of Arthrobacter sp. strain FB24.</title>
        <authorList>
            <person name="Nakatsu C.H."/>
            <person name="Barabote R."/>
            <person name="Thompson S."/>
            <person name="Bruce D."/>
            <person name="Detter C."/>
            <person name="Brettin T."/>
            <person name="Han C."/>
            <person name="Beasley F."/>
            <person name="Chen W."/>
            <person name="Konopka A."/>
            <person name="Xie G."/>
        </authorList>
    </citation>
    <scope>NUCLEOTIDE SEQUENCE [LARGE SCALE GENOMIC DNA]</scope>
    <source>
        <strain>FB24</strain>
    </source>
</reference>
<accession>A0JVG9</accession>
<sequence length="657" mass="70491">MGILDTIRNPQDLSKLTEEQLSQLAAEVRSFLIGNVSQTGGHLGPNLGVVELTMAVHRIFDSPRDSIVFDTGHQSYVHKLLTGRQDFSTLRQEGGMSGYPDRGESEHDIVESSHASSSLSWADGISRARQLTGDGDRYVIAVVGDGALTGGMAWEAINNIAADKRRRVVIVVNDNGRSYAPTVGGFADYLASLRPTIDSFRAAPAYEGTLDWWKRKLQNGGPVGQFTYRSLHAMKKGIKDWWAPQGMFEDLGMKYIGPVDGHNLQAMEHALSTAKNYAGPVIVHAMTEKGHGYAPARAHEADQFHAVGIIDPETGVPTEAGGAQSWTSVFADEIAAIADERKDIVGITGAMLIPVGLHKFAARHPERVFDVGIAEQHALTSAAGMAFGGLHPVVAVYATFLNRAFDQLLMDVALHKAGVTIVLDRAGVTGPDGASHHGMWDMAMVQIVPGLHLAAPRDATRLREELREAVAIEDAPTVVRYSKGNVGAEVEALERLSDGVDVLARRPAGSSENDVLIVSVGAMSELALDVSNRLGAQGISSTVVDPRWLLPVRKSIIALAARHRLVICIEDGVRAGGVGSRIRQEMRAAGVDTALNEVGLPVEFLDHGTRAQVLERVGLTARQITHDVVAQVLGTKVPFARPLPGQEHPTTGSLPKL</sequence>
<protein>
    <recommendedName>
        <fullName evidence="1">1-deoxy-D-xylulose-5-phosphate synthase</fullName>
        <ecNumber evidence="1">2.2.1.7</ecNumber>
    </recommendedName>
    <alternativeName>
        <fullName evidence="1">1-deoxyxylulose-5-phosphate synthase</fullName>
        <shortName evidence="1">DXP synthase</shortName>
        <shortName evidence="1">DXPS</shortName>
    </alternativeName>
</protein>
<name>DXS_ARTS2</name>